<protein>
    <recommendedName>
        <fullName evidence="1">Putative 3-methyladenine DNA glycosylase</fullName>
        <ecNumber evidence="1">3.2.2.-</ecNumber>
    </recommendedName>
</protein>
<comment type="similarity">
    <text evidence="1">Belongs to the DNA glycosylase MPG family.</text>
</comment>
<dbReference type="EC" id="3.2.2.-" evidence="1"/>
<dbReference type="EMBL" id="AL123456">
    <property type="protein sequence ID" value="CCP44453.1"/>
    <property type="molecule type" value="Genomic_DNA"/>
</dbReference>
<dbReference type="PIR" id="G70501">
    <property type="entry name" value="G70501"/>
</dbReference>
<dbReference type="RefSeq" id="WP_003408373.1">
    <property type="nucleotide sequence ID" value="NZ_NVQJ01000010.1"/>
</dbReference>
<dbReference type="SMR" id="P9WJP7"/>
<dbReference type="STRING" id="83332.Rv1688"/>
<dbReference type="PaxDb" id="83332-Rv1688"/>
<dbReference type="DNASU" id="885679"/>
<dbReference type="KEGG" id="mtu:Rv1688"/>
<dbReference type="KEGG" id="mtv:RVBD_1688"/>
<dbReference type="TubercuList" id="Rv1688"/>
<dbReference type="eggNOG" id="COG2094">
    <property type="taxonomic scope" value="Bacteria"/>
</dbReference>
<dbReference type="InParanoid" id="P9WJP7"/>
<dbReference type="OrthoDB" id="9794313at2"/>
<dbReference type="PhylomeDB" id="P9WJP7"/>
<dbReference type="Proteomes" id="UP000001584">
    <property type="component" value="Chromosome"/>
</dbReference>
<dbReference type="GO" id="GO:0003905">
    <property type="term" value="F:alkylbase DNA N-glycosylase activity"/>
    <property type="evidence" value="ECO:0000318"/>
    <property type="project" value="GO_Central"/>
</dbReference>
<dbReference type="GO" id="GO:0003677">
    <property type="term" value="F:DNA binding"/>
    <property type="evidence" value="ECO:0007669"/>
    <property type="project" value="InterPro"/>
</dbReference>
<dbReference type="GO" id="GO:0006284">
    <property type="term" value="P:base-excision repair"/>
    <property type="evidence" value="ECO:0000318"/>
    <property type="project" value="GO_Central"/>
</dbReference>
<dbReference type="CDD" id="cd00540">
    <property type="entry name" value="AAG"/>
    <property type="match status" value="1"/>
</dbReference>
<dbReference type="Gene3D" id="3.10.300.10">
    <property type="entry name" value="Methylpurine-DNA glycosylase (MPG)"/>
    <property type="match status" value="1"/>
</dbReference>
<dbReference type="HAMAP" id="MF_00527">
    <property type="entry name" value="3MGH"/>
    <property type="match status" value="1"/>
</dbReference>
<dbReference type="InterPro" id="IPR011034">
    <property type="entry name" value="Formyl_transferase-like_C_sf"/>
</dbReference>
<dbReference type="InterPro" id="IPR003180">
    <property type="entry name" value="MPG"/>
</dbReference>
<dbReference type="InterPro" id="IPR036995">
    <property type="entry name" value="MPG_sf"/>
</dbReference>
<dbReference type="NCBIfam" id="TIGR00567">
    <property type="entry name" value="3mg"/>
    <property type="match status" value="1"/>
</dbReference>
<dbReference type="NCBIfam" id="NF002003">
    <property type="entry name" value="PRK00802.1-3"/>
    <property type="match status" value="1"/>
</dbReference>
<dbReference type="PANTHER" id="PTHR10429">
    <property type="entry name" value="DNA-3-METHYLADENINE GLYCOSYLASE"/>
    <property type="match status" value="1"/>
</dbReference>
<dbReference type="PANTHER" id="PTHR10429:SF0">
    <property type="entry name" value="DNA-3-METHYLADENINE GLYCOSYLASE"/>
    <property type="match status" value="1"/>
</dbReference>
<dbReference type="Pfam" id="PF02245">
    <property type="entry name" value="Pur_DNA_glyco"/>
    <property type="match status" value="1"/>
</dbReference>
<dbReference type="SUPFAM" id="SSF50486">
    <property type="entry name" value="FMT C-terminal domain-like"/>
    <property type="match status" value="1"/>
</dbReference>
<feature type="chain" id="PRO_0000100094" description="Putative 3-methyladenine DNA glycosylase">
    <location>
        <begin position="1"/>
        <end position="203"/>
    </location>
</feature>
<sequence>MNAEELAIDPVAAAHRLLGATIAGRGVRAMVVEVEAYGGVPDGPWPDAAAHSYRGRNGRNDVMFGPPGRLYTYRSHGIHVCANVACGPDGTAAAVLLRAAAIEDGAELATSRRGQTVRAVALARGPGNLCAALGITMADNGIDLFDPSSPVRLRLNDTHRARSGPRVGVSQAADRPWRLWLTGRPEVSAYRRSSRAPARGASD</sequence>
<name>3MGH_MYCTU</name>
<keyword id="KW-0227">DNA damage</keyword>
<keyword id="KW-0234">DNA repair</keyword>
<keyword id="KW-0378">Hydrolase</keyword>
<keyword id="KW-1185">Reference proteome</keyword>
<organism>
    <name type="scientific">Mycobacterium tuberculosis (strain ATCC 25618 / H37Rv)</name>
    <dbReference type="NCBI Taxonomy" id="83332"/>
    <lineage>
        <taxon>Bacteria</taxon>
        <taxon>Bacillati</taxon>
        <taxon>Actinomycetota</taxon>
        <taxon>Actinomycetes</taxon>
        <taxon>Mycobacteriales</taxon>
        <taxon>Mycobacteriaceae</taxon>
        <taxon>Mycobacterium</taxon>
        <taxon>Mycobacterium tuberculosis complex</taxon>
    </lineage>
</organism>
<proteinExistence type="evidence at protein level"/>
<evidence type="ECO:0000255" key="1">
    <source>
        <dbReference type="HAMAP-Rule" id="MF_00527"/>
    </source>
</evidence>
<gene>
    <name type="ordered locus">Rv1688</name>
    <name type="ORF">MTCI125.10</name>
</gene>
<accession>P9WJP7</accession>
<accession>L0TAC1</accession>
<accession>O33190</accession>
<accession>P65412</accession>
<reference key="1">
    <citation type="journal article" date="1998" name="Nature">
        <title>Deciphering the biology of Mycobacterium tuberculosis from the complete genome sequence.</title>
        <authorList>
            <person name="Cole S.T."/>
            <person name="Brosch R."/>
            <person name="Parkhill J."/>
            <person name="Garnier T."/>
            <person name="Churcher C.M."/>
            <person name="Harris D.E."/>
            <person name="Gordon S.V."/>
            <person name="Eiglmeier K."/>
            <person name="Gas S."/>
            <person name="Barry C.E. III"/>
            <person name="Tekaia F."/>
            <person name="Badcock K."/>
            <person name="Basham D."/>
            <person name="Brown D."/>
            <person name="Chillingworth T."/>
            <person name="Connor R."/>
            <person name="Davies R.M."/>
            <person name="Devlin K."/>
            <person name="Feltwell T."/>
            <person name="Gentles S."/>
            <person name="Hamlin N."/>
            <person name="Holroyd S."/>
            <person name="Hornsby T."/>
            <person name="Jagels K."/>
            <person name="Krogh A."/>
            <person name="McLean J."/>
            <person name="Moule S."/>
            <person name="Murphy L.D."/>
            <person name="Oliver S."/>
            <person name="Osborne J."/>
            <person name="Quail M.A."/>
            <person name="Rajandream M.A."/>
            <person name="Rogers J."/>
            <person name="Rutter S."/>
            <person name="Seeger K."/>
            <person name="Skelton S."/>
            <person name="Squares S."/>
            <person name="Squares R."/>
            <person name="Sulston J.E."/>
            <person name="Taylor K."/>
            <person name="Whitehead S."/>
            <person name="Barrell B.G."/>
        </authorList>
    </citation>
    <scope>NUCLEOTIDE SEQUENCE [LARGE SCALE GENOMIC DNA]</scope>
    <source>
        <strain>ATCC 25618 / H37Rv</strain>
    </source>
</reference>
<reference key="2">
    <citation type="journal article" date="2011" name="Mol. Cell. Proteomics">
        <title>Proteogenomic analysis of Mycobacterium tuberculosis by high resolution mass spectrometry.</title>
        <authorList>
            <person name="Kelkar D.S."/>
            <person name="Kumar D."/>
            <person name="Kumar P."/>
            <person name="Balakrishnan L."/>
            <person name="Muthusamy B."/>
            <person name="Yadav A.K."/>
            <person name="Shrivastava P."/>
            <person name="Marimuthu A."/>
            <person name="Anand S."/>
            <person name="Sundaram H."/>
            <person name="Kingsbury R."/>
            <person name="Harsha H.C."/>
            <person name="Nair B."/>
            <person name="Prasad T.S."/>
            <person name="Chauhan D.S."/>
            <person name="Katoch K."/>
            <person name="Katoch V.M."/>
            <person name="Kumar P."/>
            <person name="Chaerkady R."/>
            <person name="Ramachandran S."/>
            <person name="Dash D."/>
            <person name="Pandey A."/>
        </authorList>
    </citation>
    <scope>IDENTIFICATION BY MASS SPECTROMETRY [LARGE SCALE ANALYSIS]</scope>
    <source>
        <strain>ATCC 25618 / H37Rv</strain>
    </source>
</reference>